<feature type="chain" id="PRO_0000139270" description="Methionine--tRNA ligase, mitochondrial">
    <location>
        <begin position="1"/>
        <end position="577"/>
    </location>
</feature>
<feature type="short sequence motif" description="'HIGH' region">
    <location>
        <begin position="25"/>
        <end position="37"/>
    </location>
</feature>
<feature type="short sequence motif" description="'KMSKS' region">
    <location>
        <begin position="329"/>
        <end position="333"/>
    </location>
</feature>
<feature type="binding site" evidence="1">
    <location>
        <position position="332"/>
    </location>
    <ligand>
        <name>ATP</name>
        <dbReference type="ChEBI" id="CHEBI:30616"/>
    </ligand>
</feature>
<comment type="catalytic activity">
    <reaction>
        <text>tRNA(Met) + L-methionine + ATP = L-methionyl-tRNA(Met) + AMP + diphosphate</text>
        <dbReference type="Rhea" id="RHEA:13481"/>
        <dbReference type="Rhea" id="RHEA-COMP:9667"/>
        <dbReference type="Rhea" id="RHEA-COMP:9698"/>
        <dbReference type="ChEBI" id="CHEBI:30616"/>
        <dbReference type="ChEBI" id="CHEBI:33019"/>
        <dbReference type="ChEBI" id="CHEBI:57844"/>
        <dbReference type="ChEBI" id="CHEBI:78442"/>
        <dbReference type="ChEBI" id="CHEBI:78530"/>
        <dbReference type="ChEBI" id="CHEBI:456215"/>
        <dbReference type="EC" id="6.1.1.10"/>
    </reaction>
</comment>
<comment type="subcellular location">
    <subcellularLocation>
        <location>Mitochondrion matrix</location>
    </subcellularLocation>
</comment>
<comment type="similarity">
    <text evidence="2">Belongs to the class-I aminoacyl-tRNA synthetase family.</text>
</comment>
<name>SYMM_CANAX</name>
<proteinExistence type="inferred from homology"/>
<reference key="1">
    <citation type="journal article" date="1998" name="Gene">
        <title>Cloning and characterization of mitochondrial methionyl-tRNA synthetase from a pathogenic fungi Candida albicans.</title>
        <authorList>
            <person name="Lee S.W."/>
            <person name="Jo Y.J."/>
            <person name="Kim S."/>
        </authorList>
    </citation>
    <scope>NUCLEOTIDE SEQUENCE [GENOMIC DNA]</scope>
</reference>
<evidence type="ECO:0000250" key="1"/>
<evidence type="ECO:0000305" key="2"/>
<gene>
    <name type="primary">MSM1</name>
</gene>
<keyword id="KW-0030">Aminoacyl-tRNA synthetase</keyword>
<keyword id="KW-0067">ATP-binding</keyword>
<keyword id="KW-0436">Ligase</keyword>
<keyword id="KW-0496">Mitochondrion</keyword>
<keyword id="KW-0547">Nucleotide-binding</keyword>
<keyword id="KW-0648">Protein biosynthesis</keyword>
<sequence length="577" mass="67120">MRFKIRGPLIQLRYKSTKAFYITTPIFYVNAAPHIGHLYSMLIADTRNKWEKLNPSKESFMLTGTDEHGLKIQSTAEKLGLEPKVLVDKVSQNFSKLAEQFDVNYDRFIRTTDNDHIELVRYFWNLMMEKGFIYTDTHSGWYSISDETFFPETQIEEVVKNGKAVKISSETKNEVVYQEETNYFFKLSMFQEQLIQFLKQNPEFIKPKHRYQFILKELEDTKLPDLSISRPSSRLKWSIEVPNDSTQKIYVWFDALLNYLTATKFPHGFEVQDSKFVTPENSIWPATHVIGKDIIRFHCIYWPIFLMAAGIELPKQVIVHSHWLCDGFKMSKSLGNLVDPMEISEYYGVDPVRFFLVENSNIDDDCKFSEELLQRSRDAVLGKYCNLISRIGGKNFSIEEAVKSFASGEFNNIREIIETYTINKDSVEGLLSSLNKLTTDLNDLYNQMDHYFTNFDYIRAIQCWWSVINQANQIFQSAEPWTYVKLINSPETPAELKEKYRILNNYFVYLCAETTRISSILIQPVMPQLSKKILDRLNVSGRTSEFTTLSADLQYGSGANSKSHKVPLEKIAPRDIK</sequence>
<dbReference type="EC" id="6.1.1.10"/>
<dbReference type="EMBL" id="AB006140">
    <property type="protein sequence ID" value="BAA33373.1"/>
    <property type="molecule type" value="Genomic_DNA"/>
</dbReference>
<dbReference type="SMR" id="O74634"/>
<dbReference type="VEuPathDB" id="FungiDB:C5_04650C_A"/>
<dbReference type="VEuPathDB" id="FungiDB:CAWG_04833"/>
<dbReference type="BRENDA" id="6.1.1.10">
    <property type="organism ID" value="1096"/>
</dbReference>
<dbReference type="GO" id="GO:0005759">
    <property type="term" value="C:mitochondrial matrix"/>
    <property type="evidence" value="ECO:0007669"/>
    <property type="project" value="UniProtKB-SubCell"/>
</dbReference>
<dbReference type="GO" id="GO:0005524">
    <property type="term" value="F:ATP binding"/>
    <property type="evidence" value="ECO:0007669"/>
    <property type="project" value="UniProtKB-KW"/>
</dbReference>
<dbReference type="GO" id="GO:0004825">
    <property type="term" value="F:methionine-tRNA ligase activity"/>
    <property type="evidence" value="ECO:0007669"/>
    <property type="project" value="UniProtKB-EC"/>
</dbReference>
<dbReference type="GO" id="GO:0006431">
    <property type="term" value="P:methionyl-tRNA aminoacylation"/>
    <property type="evidence" value="ECO:0007669"/>
    <property type="project" value="InterPro"/>
</dbReference>
<dbReference type="CDD" id="cd00814">
    <property type="entry name" value="MetRS_core"/>
    <property type="match status" value="1"/>
</dbReference>
<dbReference type="FunFam" id="2.170.220.10:FF:000002">
    <property type="entry name" value="Methionine--tRNA ligase"/>
    <property type="match status" value="1"/>
</dbReference>
<dbReference type="FunFam" id="1.10.730.10:FF:000116">
    <property type="entry name" value="Methionine--tRNA ligase, mitochondrial"/>
    <property type="match status" value="1"/>
</dbReference>
<dbReference type="Gene3D" id="2.170.220.10">
    <property type="match status" value="1"/>
</dbReference>
<dbReference type="Gene3D" id="3.40.50.620">
    <property type="entry name" value="HUPs"/>
    <property type="match status" value="1"/>
</dbReference>
<dbReference type="Gene3D" id="1.10.730.10">
    <property type="entry name" value="Isoleucyl-tRNA Synthetase, Domain 1"/>
    <property type="match status" value="1"/>
</dbReference>
<dbReference type="InterPro" id="IPR014758">
    <property type="entry name" value="Met-tRNA_synth"/>
</dbReference>
<dbReference type="InterPro" id="IPR023457">
    <property type="entry name" value="Met-tRNA_synth_2"/>
</dbReference>
<dbReference type="InterPro" id="IPR015413">
    <property type="entry name" value="Methionyl/Leucyl_tRNA_Synth"/>
</dbReference>
<dbReference type="InterPro" id="IPR033911">
    <property type="entry name" value="MetRS_core"/>
</dbReference>
<dbReference type="InterPro" id="IPR014729">
    <property type="entry name" value="Rossmann-like_a/b/a_fold"/>
</dbReference>
<dbReference type="InterPro" id="IPR009080">
    <property type="entry name" value="tRNAsynth_Ia_anticodon-bd"/>
</dbReference>
<dbReference type="NCBIfam" id="TIGR00398">
    <property type="entry name" value="metG"/>
    <property type="match status" value="1"/>
</dbReference>
<dbReference type="PANTHER" id="PTHR43326:SF1">
    <property type="entry name" value="METHIONINE--TRNA LIGASE, MITOCHONDRIAL"/>
    <property type="match status" value="1"/>
</dbReference>
<dbReference type="PANTHER" id="PTHR43326">
    <property type="entry name" value="METHIONYL-TRNA SYNTHETASE"/>
    <property type="match status" value="1"/>
</dbReference>
<dbReference type="Pfam" id="PF09334">
    <property type="entry name" value="tRNA-synt_1g"/>
    <property type="match status" value="1"/>
</dbReference>
<dbReference type="PRINTS" id="PR01041">
    <property type="entry name" value="TRNASYNTHMET"/>
</dbReference>
<dbReference type="SUPFAM" id="SSF47323">
    <property type="entry name" value="Anticodon-binding domain of a subclass of class I aminoacyl-tRNA synthetases"/>
    <property type="match status" value="1"/>
</dbReference>
<dbReference type="SUPFAM" id="SSF52374">
    <property type="entry name" value="Nucleotidylyl transferase"/>
    <property type="match status" value="1"/>
</dbReference>
<protein>
    <recommendedName>
        <fullName>Methionine--tRNA ligase, mitochondrial</fullName>
        <ecNumber>6.1.1.10</ecNumber>
    </recommendedName>
    <alternativeName>
        <fullName>Methionyl-tRNA synthetase</fullName>
        <shortName>MetRS</shortName>
    </alternativeName>
</protein>
<organism>
    <name type="scientific">Candida albicans</name>
    <name type="common">Yeast</name>
    <dbReference type="NCBI Taxonomy" id="5476"/>
    <lineage>
        <taxon>Eukaryota</taxon>
        <taxon>Fungi</taxon>
        <taxon>Dikarya</taxon>
        <taxon>Ascomycota</taxon>
        <taxon>Saccharomycotina</taxon>
        <taxon>Pichiomycetes</taxon>
        <taxon>Debaryomycetaceae</taxon>
        <taxon>Candida/Lodderomyces clade</taxon>
        <taxon>Candida</taxon>
    </lineage>
</organism>
<accession>O74634</accession>